<accession>Q5R801</accession>
<reference key="1">
    <citation type="submission" date="2004-11" db="EMBL/GenBank/DDBJ databases">
        <authorList>
            <consortium name="The German cDNA consortium"/>
        </authorList>
    </citation>
    <scope>NUCLEOTIDE SEQUENCE [LARGE SCALE MRNA]</scope>
    <source>
        <tissue>Kidney</tissue>
    </source>
</reference>
<name>AAKB1_PONAB</name>
<organism>
    <name type="scientific">Pongo abelii</name>
    <name type="common">Sumatran orangutan</name>
    <name type="synonym">Pongo pygmaeus abelii</name>
    <dbReference type="NCBI Taxonomy" id="9601"/>
    <lineage>
        <taxon>Eukaryota</taxon>
        <taxon>Metazoa</taxon>
        <taxon>Chordata</taxon>
        <taxon>Craniata</taxon>
        <taxon>Vertebrata</taxon>
        <taxon>Euteleostomi</taxon>
        <taxon>Mammalia</taxon>
        <taxon>Eutheria</taxon>
        <taxon>Euarchontoglires</taxon>
        <taxon>Primates</taxon>
        <taxon>Haplorrhini</taxon>
        <taxon>Catarrhini</taxon>
        <taxon>Hominidae</taxon>
        <taxon>Pongo</taxon>
    </lineage>
</organism>
<dbReference type="EMBL" id="CR859955">
    <property type="protein sequence ID" value="CAH92109.1"/>
    <property type="molecule type" value="mRNA"/>
</dbReference>
<dbReference type="RefSeq" id="NP_001126231.1">
    <property type="nucleotide sequence ID" value="NM_001132759.1"/>
</dbReference>
<dbReference type="SMR" id="Q5R801"/>
<dbReference type="FunCoup" id="Q5R801">
    <property type="interactions" value="3083"/>
</dbReference>
<dbReference type="STRING" id="9601.ENSPPYP00000005719"/>
<dbReference type="CAZy" id="CBM48">
    <property type="family name" value="Carbohydrate-Binding Module Family 48"/>
</dbReference>
<dbReference type="Ensembl" id="ENSPPYT00000005939.2">
    <property type="protein sequence ID" value="ENSPPYP00000005719.1"/>
    <property type="gene ID" value="ENSPPYG00000005018.3"/>
</dbReference>
<dbReference type="GeneID" id="100173201"/>
<dbReference type="KEGG" id="pon:100173201"/>
<dbReference type="CTD" id="5564"/>
<dbReference type="eggNOG" id="KOG1616">
    <property type="taxonomic scope" value="Eukaryota"/>
</dbReference>
<dbReference type="GeneTree" id="ENSGT00940000155307"/>
<dbReference type="HOGENOM" id="CLU_070949_2_0_1"/>
<dbReference type="InParanoid" id="Q5R801"/>
<dbReference type="OMA" id="QRTINAP"/>
<dbReference type="OrthoDB" id="531008at2759"/>
<dbReference type="TreeFam" id="TF313827"/>
<dbReference type="Proteomes" id="UP000001595">
    <property type="component" value="Chromosome 12"/>
</dbReference>
<dbReference type="GO" id="GO:0005737">
    <property type="term" value="C:cytoplasm"/>
    <property type="evidence" value="ECO:0007669"/>
    <property type="project" value="TreeGrafter"/>
</dbReference>
<dbReference type="GO" id="GO:0031588">
    <property type="term" value="C:nucleotide-activated protein kinase complex"/>
    <property type="evidence" value="ECO:0007669"/>
    <property type="project" value="Ensembl"/>
</dbReference>
<dbReference type="GO" id="GO:0005634">
    <property type="term" value="C:nucleus"/>
    <property type="evidence" value="ECO:0007669"/>
    <property type="project" value="Ensembl"/>
</dbReference>
<dbReference type="GO" id="GO:0019901">
    <property type="term" value="F:protein kinase binding"/>
    <property type="evidence" value="ECO:0007669"/>
    <property type="project" value="TreeGrafter"/>
</dbReference>
<dbReference type="GO" id="GO:0031669">
    <property type="term" value="P:cellular response to nutrient levels"/>
    <property type="evidence" value="ECO:0007669"/>
    <property type="project" value="Ensembl"/>
</dbReference>
<dbReference type="GO" id="GO:0006633">
    <property type="term" value="P:fatty acid biosynthetic process"/>
    <property type="evidence" value="ECO:0007669"/>
    <property type="project" value="UniProtKB-KW"/>
</dbReference>
<dbReference type="GO" id="GO:0035878">
    <property type="term" value="P:nail development"/>
    <property type="evidence" value="ECO:0007669"/>
    <property type="project" value="Ensembl"/>
</dbReference>
<dbReference type="GO" id="GO:0120162">
    <property type="term" value="P:positive regulation of cold-induced thermogenesis"/>
    <property type="evidence" value="ECO:0007669"/>
    <property type="project" value="Ensembl"/>
</dbReference>
<dbReference type="GO" id="GO:0007165">
    <property type="term" value="P:signal transduction"/>
    <property type="evidence" value="ECO:0007669"/>
    <property type="project" value="TreeGrafter"/>
</dbReference>
<dbReference type="CDD" id="cd02859">
    <property type="entry name" value="E_set_AMPKbeta_like_N"/>
    <property type="match status" value="1"/>
</dbReference>
<dbReference type="FunFam" id="2.60.40.10:FF:000139">
    <property type="entry name" value="Protein kinase AMP-activated non-catalytic subunit beta 1"/>
    <property type="match status" value="1"/>
</dbReference>
<dbReference type="Gene3D" id="6.20.250.60">
    <property type="match status" value="1"/>
</dbReference>
<dbReference type="Gene3D" id="2.60.40.10">
    <property type="entry name" value="Immunoglobulins"/>
    <property type="match status" value="1"/>
</dbReference>
<dbReference type="InterPro" id="IPR032640">
    <property type="entry name" value="AMPK1_CBM"/>
</dbReference>
<dbReference type="InterPro" id="IPR006828">
    <property type="entry name" value="ASC_dom"/>
</dbReference>
<dbReference type="InterPro" id="IPR037256">
    <property type="entry name" value="ASC_dom_sf"/>
</dbReference>
<dbReference type="InterPro" id="IPR050827">
    <property type="entry name" value="CRP1_MDG1_kinase"/>
</dbReference>
<dbReference type="InterPro" id="IPR013783">
    <property type="entry name" value="Ig-like_fold"/>
</dbReference>
<dbReference type="InterPro" id="IPR014756">
    <property type="entry name" value="Ig_E-set"/>
</dbReference>
<dbReference type="PANTHER" id="PTHR10343">
    <property type="entry name" value="5'-AMP-ACTIVATED PROTEIN KINASE , BETA SUBUNIT"/>
    <property type="match status" value="1"/>
</dbReference>
<dbReference type="PANTHER" id="PTHR10343:SF84">
    <property type="entry name" value="5'-AMP-ACTIVATED PROTEIN KINASE SUBUNIT BETA-1"/>
    <property type="match status" value="1"/>
</dbReference>
<dbReference type="Pfam" id="PF16561">
    <property type="entry name" value="AMPK1_CBM"/>
    <property type="match status" value="1"/>
</dbReference>
<dbReference type="Pfam" id="PF04739">
    <property type="entry name" value="AMPKBI"/>
    <property type="match status" value="1"/>
</dbReference>
<dbReference type="SMART" id="SM01010">
    <property type="entry name" value="AMPKBI"/>
    <property type="match status" value="1"/>
</dbReference>
<dbReference type="SUPFAM" id="SSF160219">
    <property type="entry name" value="AMPKBI-like"/>
    <property type="match status" value="1"/>
</dbReference>
<dbReference type="SUPFAM" id="SSF81296">
    <property type="entry name" value="E set domains"/>
    <property type="match status" value="1"/>
</dbReference>
<proteinExistence type="evidence at transcript level"/>
<protein>
    <recommendedName>
        <fullName>5'-AMP-activated protein kinase subunit beta-1</fullName>
        <shortName>AMPK subunit beta-1</shortName>
        <shortName>AMPKb</shortName>
    </recommendedName>
</protein>
<gene>
    <name type="primary">PRKAB1</name>
</gene>
<evidence type="ECO:0000250" key="1"/>
<evidence type="ECO:0000250" key="2">
    <source>
        <dbReference type="UniProtKB" id="P80386"/>
    </source>
</evidence>
<evidence type="ECO:0000250" key="3">
    <source>
        <dbReference type="UniProtKB" id="Q9R078"/>
    </source>
</evidence>
<evidence type="ECO:0000250" key="4">
    <source>
        <dbReference type="UniProtKB" id="Q9Y478"/>
    </source>
</evidence>
<evidence type="ECO:0000256" key="5">
    <source>
        <dbReference type="SAM" id="MobiDB-lite"/>
    </source>
</evidence>
<evidence type="ECO:0000305" key="6"/>
<comment type="function">
    <text evidence="1">Non-catalytic subunit of AMP-activated protein kinase (AMPK), an energy sensor protein kinase that plays a key role in regulating cellular energy metabolism. In response to reduction of intracellular ATP levels, AMPK activates energy-producing pathways and inhibits energy-consuming processes: inhibits protein, carbohydrate and lipid biosynthesis, as well as cell growth and proliferation. AMPK acts via direct phosphorylation of metabolic enzymes, and by longer-term effects via phosphorylation of transcription regulators. Also acts as a regulator of cellular polarity by remodeling the actin cytoskeleton; probably by indirectly activating myosin. Beta non-catalytic subunit acts as a scaffold on which the AMPK complex assembles, via its C-terminus that bridges alpha (PRKAA1 or PRKAA2) and gamma subunits (PRKAG1, PRKAG2 or PRKAG3) (By similarity).</text>
</comment>
<comment type="subunit">
    <text evidence="1">AMPK is a heterotrimer of an alpha catalytic subunit (PRKAA1 or PRKAA2), a beta (PRKAB1 or PRKAB2) and a gamma non-catalytic subunits (PRKAG1, PRKAG2 or PRKAG3). Interacts with FNIP1 and FNIP2 (By similarity).</text>
</comment>
<comment type="domain">
    <text evidence="1">The glycogen-binding domain may target AMPK to glycogen so that other factors like glycogen-bound debranching enzyme or protein phosphatases can directly affect AMPK activity.</text>
</comment>
<comment type="PTM">
    <text>Phosphorylated when associated with the catalytic subunit (PRKAA1 or PRKAA2). Phosphorylated by ULK1; leading to negatively regulate AMPK activity and suggesting the existence of a regulatory feedback loop between ULK1 and AMPK.</text>
</comment>
<comment type="similarity">
    <text evidence="6">Belongs to the 5'-AMP-activated protein kinase beta subunit family.</text>
</comment>
<keyword id="KW-0275">Fatty acid biosynthesis</keyword>
<keyword id="KW-0276">Fatty acid metabolism</keyword>
<keyword id="KW-0444">Lipid biosynthesis</keyword>
<keyword id="KW-0443">Lipid metabolism</keyword>
<keyword id="KW-0449">Lipoprotein</keyword>
<keyword id="KW-0519">Myristate</keyword>
<keyword id="KW-0597">Phosphoprotein</keyword>
<keyword id="KW-1185">Reference proteome</keyword>
<feature type="initiator methionine" description="Removed" evidence="4">
    <location>
        <position position="1"/>
    </location>
</feature>
<feature type="chain" id="PRO_0000204366" description="5'-AMP-activated protein kinase subunit beta-1">
    <location>
        <begin position="2"/>
        <end position="270"/>
    </location>
</feature>
<feature type="region of interest" description="Disordered" evidence="5">
    <location>
        <begin position="1"/>
        <end position="46"/>
    </location>
</feature>
<feature type="region of interest" description="Glycogen-binding domain" evidence="1">
    <location>
        <begin position="68"/>
        <end position="163"/>
    </location>
</feature>
<feature type="compositionally biased region" description="Basic and acidic residues" evidence="5">
    <location>
        <begin position="21"/>
        <end position="36"/>
    </location>
</feature>
<feature type="modified residue" description="Phosphothreonine" evidence="4">
    <location>
        <position position="4"/>
    </location>
</feature>
<feature type="modified residue" description="Phosphoserine" evidence="4">
    <location>
        <position position="5"/>
    </location>
</feature>
<feature type="modified residue" description="Phosphoserine" evidence="4">
    <location>
        <position position="6"/>
    </location>
</feature>
<feature type="modified residue" description="Phosphothreonine" evidence="4">
    <location>
        <position position="19"/>
    </location>
</feature>
<feature type="modified residue" description="Phosphoserine; by autocatalysis" evidence="2">
    <location>
        <position position="24"/>
    </location>
</feature>
<feature type="modified residue" description="Phosphoserine; by autocatalysis" evidence="2">
    <location>
        <position position="25"/>
    </location>
</feature>
<feature type="modified residue" description="Phosphoserine" evidence="4">
    <location>
        <position position="40"/>
    </location>
</feature>
<feature type="modified residue" description="Phosphoserine" evidence="4">
    <location>
        <position position="96"/>
    </location>
</feature>
<feature type="modified residue" description="Phosphoserine" evidence="2">
    <location>
        <position position="101"/>
    </location>
</feature>
<feature type="modified residue" description="Phosphoserine; by autocatalysis" evidence="3">
    <location>
        <position position="108"/>
    </location>
</feature>
<feature type="modified residue" description="Phosphothreonine" evidence="4">
    <location>
        <position position="148"/>
    </location>
</feature>
<feature type="modified residue" description="Phosphoserine" evidence="3">
    <location>
        <position position="182"/>
    </location>
</feature>
<feature type="lipid moiety-binding region" description="N-myristoyl glycine" evidence="1">
    <location>
        <position position="2"/>
    </location>
</feature>
<sequence length="270" mass="30401">MGNTSSERAALERHGGHKTPRRDSSGGTKDGDRPKILMDSPEDADLFHSEEIKAPEKEEFLAWQRDLEVNDKAPAQARPTVFRWTGGGKEVYLSGSFNNWSKLPLTRSHNNFVAILDLPEGEHQYKFFVDGQWTHDPSEPIVTSQLGTVNNIIQVKKTDFEVFDALMVDSQKCSDVSELSSSPPGPYHQEPYVCKPEERFRAPPILPPHLLQVILNKDTGISCDPALLPEPNHVMLNHLYALSIKDGVMVLSATHRYKKKYVTTLLYKPI</sequence>